<accession>Q9I843</accession>
<comment type="function">
    <text evidence="1">PLA2 catalyzes the calcium-dependent hydrolysis of the 2-acyl groups in 3-sn-phosphoglycerides.</text>
</comment>
<comment type="catalytic activity">
    <reaction evidence="3 4">
        <text>a 1,2-diacyl-sn-glycero-3-phosphocholine + H2O = a 1-acyl-sn-glycero-3-phosphocholine + a fatty acid + H(+)</text>
        <dbReference type="Rhea" id="RHEA:15801"/>
        <dbReference type="ChEBI" id="CHEBI:15377"/>
        <dbReference type="ChEBI" id="CHEBI:15378"/>
        <dbReference type="ChEBI" id="CHEBI:28868"/>
        <dbReference type="ChEBI" id="CHEBI:57643"/>
        <dbReference type="ChEBI" id="CHEBI:58168"/>
        <dbReference type="EC" id="3.1.1.4"/>
    </reaction>
</comment>
<comment type="cofactor">
    <cofactor evidence="1">
        <name>Ca(2+)</name>
        <dbReference type="ChEBI" id="CHEBI:29108"/>
    </cofactor>
    <text evidence="1">Binds 1 Ca(2+) ion.</text>
</comment>
<comment type="subcellular location">
    <subcellularLocation>
        <location evidence="1">Secreted</location>
    </subcellularLocation>
</comment>
<comment type="tissue specificity">
    <text>Expressed by the venom gland.</text>
</comment>
<comment type="similarity">
    <text evidence="5">Belongs to the phospholipase A2 family. Group I subfamily. D49 sub-subfamily.</text>
</comment>
<keyword id="KW-0106">Calcium</keyword>
<keyword id="KW-1015">Disulfide bond</keyword>
<keyword id="KW-0378">Hydrolase</keyword>
<keyword id="KW-0442">Lipid degradation</keyword>
<keyword id="KW-0443">Lipid metabolism</keyword>
<keyword id="KW-0479">Metal-binding</keyword>
<keyword id="KW-0964">Secreted</keyword>
<keyword id="KW-0732">Signal</keyword>
<feature type="signal peptide" evidence="2">
    <location>
        <begin position="1"/>
        <end position="21"/>
    </location>
</feature>
<feature type="propeptide" id="PRO_0000022906" evidence="1">
    <location>
        <begin position="22"/>
        <end position="27"/>
    </location>
</feature>
<feature type="chain" id="PRO_0000022907" description="Basic phospholipase A2 cPm05">
    <location>
        <begin position="28"/>
        <end position="145"/>
    </location>
</feature>
<feature type="active site" evidence="1">
    <location>
        <position position="75"/>
    </location>
</feature>
<feature type="active site" evidence="1">
    <location>
        <position position="119"/>
    </location>
</feature>
<feature type="binding site" evidence="1">
    <location>
        <position position="55"/>
    </location>
    <ligand>
        <name>Ca(2+)</name>
        <dbReference type="ChEBI" id="CHEBI:29108"/>
    </ligand>
</feature>
<feature type="binding site" evidence="1">
    <location>
        <position position="57"/>
    </location>
    <ligand>
        <name>Ca(2+)</name>
        <dbReference type="ChEBI" id="CHEBI:29108"/>
    </ligand>
</feature>
<feature type="binding site" evidence="1">
    <location>
        <position position="59"/>
    </location>
    <ligand>
        <name>Ca(2+)</name>
        <dbReference type="ChEBI" id="CHEBI:29108"/>
    </ligand>
</feature>
<feature type="binding site" evidence="1">
    <location>
        <position position="76"/>
    </location>
    <ligand>
        <name>Ca(2+)</name>
        <dbReference type="ChEBI" id="CHEBI:29108"/>
    </ligand>
</feature>
<feature type="disulfide bond" evidence="1">
    <location>
        <begin position="38"/>
        <end position="98"/>
    </location>
</feature>
<feature type="disulfide bond" evidence="1">
    <location>
        <begin position="54"/>
        <end position="144"/>
    </location>
</feature>
<feature type="disulfide bond" evidence="1">
    <location>
        <begin position="56"/>
        <end position="72"/>
    </location>
</feature>
<feature type="disulfide bond" evidence="1">
    <location>
        <begin position="71"/>
        <end position="125"/>
    </location>
</feature>
<feature type="disulfide bond" evidence="1">
    <location>
        <begin position="78"/>
        <end position="118"/>
    </location>
</feature>
<feature type="disulfide bond" evidence="1">
    <location>
        <begin position="87"/>
        <end position="111"/>
    </location>
</feature>
<feature type="disulfide bond" evidence="1">
    <location>
        <begin position="105"/>
        <end position="116"/>
    </location>
</feature>
<organism>
    <name type="scientific">Laticauda semifasciata</name>
    <name type="common">Black-banded sea krait</name>
    <name type="synonym">Pseudolaticauda semifasciata</name>
    <dbReference type="NCBI Taxonomy" id="8631"/>
    <lineage>
        <taxon>Eukaryota</taxon>
        <taxon>Metazoa</taxon>
        <taxon>Chordata</taxon>
        <taxon>Craniata</taxon>
        <taxon>Vertebrata</taxon>
        <taxon>Euteleostomi</taxon>
        <taxon>Lepidosauria</taxon>
        <taxon>Squamata</taxon>
        <taxon>Bifurcata</taxon>
        <taxon>Unidentata</taxon>
        <taxon>Episquamata</taxon>
        <taxon>Toxicofera</taxon>
        <taxon>Serpentes</taxon>
        <taxon>Colubroidea</taxon>
        <taxon>Elapidae</taxon>
        <taxon>Laticaudinae</taxon>
        <taxon>Laticauda</taxon>
    </lineage>
</organism>
<protein>
    <recommendedName>
        <fullName>Basic phospholipase A2 cPm05</fullName>
        <shortName>svPLA2</shortName>
        <ecNumber>3.1.1.4</ecNumber>
    </recommendedName>
    <alternativeName>
        <fullName>Phosphatidylcholine 2-acylhydrolase</fullName>
    </alternativeName>
</protein>
<evidence type="ECO:0000250" key="1"/>
<evidence type="ECO:0000255" key="2"/>
<evidence type="ECO:0000255" key="3">
    <source>
        <dbReference type="PROSITE-ProRule" id="PRU10035"/>
    </source>
</evidence>
<evidence type="ECO:0000255" key="4">
    <source>
        <dbReference type="PROSITE-ProRule" id="PRU10036"/>
    </source>
</evidence>
<evidence type="ECO:0000305" key="5"/>
<proteinExistence type="evidence at transcript level"/>
<reference key="1">
    <citation type="submission" date="2000-01" db="EMBL/GenBank/DDBJ databases">
        <authorList>
            <person name="Tamiya T."/>
            <person name="Fujimi T.J."/>
        </authorList>
    </citation>
    <scope>NUCLEOTIDE SEQUENCE [MRNA]</scope>
    <source>
        <tissue>Venom gland</tissue>
    </source>
</reference>
<name>PA2BE_LATSE</name>
<sequence length="145" mass="16073">MYPAHLLVLLAVCISLLGASAIPPLPLNLVQFTYLIQCANKGSRASYHYADYGCYCGAGGSGTPVDELDRCCKVHDDCYGEAEKMGCYPKLTMYNYYCGTEGPYCNTKTDCQRYVCACDLQAAKCFARSPYNNKNYNIDTSKRCK</sequence>
<dbReference type="EC" id="3.1.1.4"/>
<dbReference type="EMBL" id="AB037413">
    <property type="protein sequence ID" value="BAB03300.1"/>
    <property type="molecule type" value="mRNA"/>
</dbReference>
<dbReference type="SMR" id="Q9I843"/>
<dbReference type="GO" id="GO:0005576">
    <property type="term" value="C:extracellular region"/>
    <property type="evidence" value="ECO:0007669"/>
    <property type="project" value="UniProtKB-SubCell"/>
</dbReference>
<dbReference type="GO" id="GO:0005509">
    <property type="term" value="F:calcium ion binding"/>
    <property type="evidence" value="ECO:0007669"/>
    <property type="project" value="InterPro"/>
</dbReference>
<dbReference type="GO" id="GO:0047498">
    <property type="term" value="F:calcium-dependent phospholipase A2 activity"/>
    <property type="evidence" value="ECO:0007669"/>
    <property type="project" value="TreeGrafter"/>
</dbReference>
<dbReference type="GO" id="GO:0005543">
    <property type="term" value="F:phospholipid binding"/>
    <property type="evidence" value="ECO:0007669"/>
    <property type="project" value="TreeGrafter"/>
</dbReference>
<dbReference type="GO" id="GO:0050482">
    <property type="term" value="P:arachidonate secretion"/>
    <property type="evidence" value="ECO:0007669"/>
    <property type="project" value="InterPro"/>
</dbReference>
<dbReference type="GO" id="GO:0016042">
    <property type="term" value="P:lipid catabolic process"/>
    <property type="evidence" value="ECO:0007669"/>
    <property type="project" value="UniProtKB-KW"/>
</dbReference>
<dbReference type="GO" id="GO:0006644">
    <property type="term" value="P:phospholipid metabolic process"/>
    <property type="evidence" value="ECO:0007669"/>
    <property type="project" value="InterPro"/>
</dbReference>
<dbReference type="CDD" id="cd00125">
    <property type="entry name" value="PLA2c"/>
    <property type="match status" value="1"/>
</dbReference>
<dbReference type="FunFam" id="1.20.90.10:FF:000007">
    <property type="entry name" value="Acidic phospholipase A2"/>
    <property type="match status" value="1"/>
</dbReference>
<dbReference type="Gene3D" id="1.20.90.10">
    <property type="entry name" value="Phospholipase A2 domain"/>
    <property type="match status" value="1"/>
</dbReference>
<dbReference type="InterPro" id="IPR001211">
    <property type="entry name" value="PLipase_A2"/>
</dbReference>
<dbReference type="InterPro" id="IPR033112">
    <property type="entry name" value="PLipase_A2_Asp_AS"/>
</dbReference>
<dbReference type="InterPro" id="IPR016090">
    <property type="entry name" value="PLipase_A2_dom"/>
</dbReference>
<dbReference type="InterPro" id="IPR036444">
    <property type="entry name" value="PLipase_A2_dom_sf"/>
</dbReference>
<dbReference type="InterPro" id="IPR033113">
    <property type="entry name" value="PLipase_A2_His_AS"/>
</dbReference>
<dbReference type="PANTHER" id="PTHR11716:SF51">
    <property type="entry name" value="PHOSPHOLIPASE A2"/>
    <property type="match status" value="1"/>
</dbReference>
<dbReference type="PANTHER" id="PTHR11716">
    <property type="entry name" value="PHOSPHOLIPASE A2 FAMILY MEMBER"/>
    <property type="match status" value="1"/>
</dbReference>
<dbReference type="Pfam" id="PF00068">
    <property type="entry name" value="Phospholip_A2_1"/>
    <property type="match status" value="1"/>
</dbReference>
<dbReference type="PRINTS" id="PR00389">
    <property type="entry name" value="PHPHLIPASEA2"/>
</dbReference>
<dbReference type="SMART" id="SM00085">
    <property type="entry name" value="PA2c"/>
    <property type="match status" value="1"/>
</dbReference>
<dbReference type="SUPFAM" id="SSF48619">
    <property type="entry name" value="Phospholipase A2, PLA2"/>
    <property type="match status" value="1"/>
</dbReference>
<dbReference type="PROSITE" id="PS00119">
    <property type="entry name" value="PA2_ASP"/>
    <property type="match status" value="1"/>
</dbReference>
<dbReference type="PROSITE" id="PS00118">
    <property type="entry name" value="PA2_HIS"/>
    <property type="match status" value="1"/>
</dbReference>